<comment type="catalytic activity">
    <reaction evidence="1">
        <text>tRNA(Leu) + L-leucine + ATP = L-leucyl-tRNA(Leu) + AMP + diphosphate</text>
        <dbReference type="Rhea" id="RHEA:11688"/>
        <dbReference type="Rhea" id="RHEA-COMP:9613"/>
        <dbReference type="Rhea" id="RHEA-COMP:9622"/>
        <dbReference type="ChEBI" id="CHEBI:30616"/>
        <dbReference type="ChEBI" id="CHEBI:33019"/>
        <dbReference type="ChEBI" id="CHEBI:57427"/>
        <dbReference type="ChEBI" id="CHEBI:78442"/>
        <dbReference type="ChEBI" id="CHEBI:78494"/>
        <dbReference type="ChEBI" id="CHEBI:456215"/>
        <dbReference type="EC" id="6.1.1.4"/>
    </reaction>
</comment>
<comment type="subcellular location">
    <subcellularLocation>
        <location evidence="1">Cytoplasm</location>
    </subcellularLocation>
</comment>
<comment type="similarity">
    <text evidence="1">Belongs to the class-I aminoacyl-tRNA synthetase family.</text>
</comment>
<keyword id="KW-0030">Aminoacyl-tRNA synthetase</keyword>
<keyword id="KW-0067">ATP-binding</keyword>
<keyword id="KW-0963">Cytoplasm</keyword>
<keyword id="KW-0436">Ligase</keyword>
<keyword id="KW-0547">Nucleotide-binding</keyword>
<keyword id="KW-0648">Protein biosynthesis</keyword>
<keyword id="KW-1185">Reference proteome</keyword>
<gene>
    <name evidence="1" type="primary">leuS</name>
    <name type="ordered locus">BAB1_1815</name>
</gene>
<accession>Q2YLH9</accession>
<evidence type="ECO:0000255" key="1">
    <source>
        <dbReference type="HAMAP-Rule" id="MF_00049"/>
    </source>
</evidence>
<dbReference type="EC" id="6.1.1.4" evidence="1"/>
<dbReference type="EMBL" id="AM040264">
    <property type="protein sequence ID" value="CAJ11771.1"/>
    <property type="molecule type" value="Genomic_DNA"/>
</dbReference>
<dbReference type="RefSeq" id="WP_002969611.1">
    <property type="nucleotide sequence ID" value="NZ_KN046823.1"/>
</dbReference>
<dbReference type="SMR" id="Q2YLH9"/>
<dbReference type="STRING" id="359391.BAB1_1815"/>
<dbReference type="GeneID" id="93017853"/>
<dbReference type="KEGG" id="bmf:BAB1_1815"/>
<dbReference type="PATRIC" id="fig|359391.11.peg.325"/>
<dbReference type="HOGENOM" id="CLU_004427_0_0_5"/>
<dbReference type="PhylomeDB" id="Q2YLH9"/>
<dbReference type="Proteomes" id="UP000002719">
    <property type="component" value="Chromosome I"/>
</dbReference>
<dbReference type="GO" id="GO:0005829">
    <property type="term" value="C:cytosol"/>
    <property type="evidence" value="ECO:0007669"/>
    <property type="project" value="TreeGrafter"/>
</dbReference>
<dbReference type="GO" id="GO:0002161">
    <property type="term" value="F:aminoacyl-tRNA deacylase activity"/>
    <property type="evidence" value="ECO:0007669"/>
    <property type="project" value="InterPro"/>
</dbReference>
<dbReference type="GO" id="GO:0005524">
    <property type="term" value="F:ATP binding"/>
    <property type="evidence" value="ECO:0007669"/>
    <property type="project" value="UniProtKB-UniRule"/>
</dbReference>
<dbReference type="GO" id="GO:0004823">
    <property type="term" value="F:leucine-tRNA ligase activity"/>
    <property type="evidence" value="ECO:0007669"/>
    <property type="project" value="UniProtKB-UniRule"/>
</dbReference>
<dbReference type="GO" id="GO:0006429">
    <property type="term" value="P:leucyl-tRNA aminoacylation"/>
    <property type="evidence" value="ECO:0007669"/>
    <property type="project" value="UniProtKB-UniRule"/>
</dbReference>
<dbReference type="CDD" id="cd07958">
    <property type="entry name" value="Anticodon_Ia_Leu_BEm"/>
    <property type="match status" value="1"/>
</dbReference>
<dbReference type="CDD" id="cd00812">
    <property type="entry name" value="LeuRS_core"/>
    <property type="match status" value="1"/>
</dbReference>
<dbReference type="FunFam" id="1.10.730.10:FF:000002">
    <property type="entry name" value="Leucine--tRNA ligase"/>
    <property type="match status" value="1"/>
</dbReference>
<dbReference type="FunFam" id="3.40.50.620:FF:000003">
    <property type="entry name" value="Leucine--tRNA ligase"/>
    <property type="match status" value="1"/>
</dbReference>
<dbReference type="Gene3D" id="2.20.28.290">
    <property type="match status" value="1"/>
</dbReference>
<dbReference type="Gene3D" id="3.10.20.590">
    <property type="match status" value="1"/>
</dbReference>
<dbReference type="Gene3D" id="3.40.50.620">
    <property type="entry name" value="HUPs"/>
    <property type="match status" value="2"/>
</dbReference>
<dbReference type="Gene3D" id="1.10.730.10">
    <property type="entry name" value="Isoleucyl-tRNA Synthetase, Domain 1"/>
    <property type="match status" value="1"/>
</dbReference>
<dbReference type="Gene3D" id="3.90.740.10">
    <property type="entry name" value="Valyl/Leucyl/Isoleucyl-tRNA synthetase, editing domain"/>
    <property type="match status" value="1"/>
</dbReference>
<dbReference type="HAMAP" id="MF_00049_B">
    <property type="entry name" value="Leu_tRNA_synth_B"/>
    <property type="match status" value="1"/>
</dbReference>
<dbReference type="InterPro" id="IPR001412">
    <property type="entry name" value="aa-tRNA-synth_I_CS"/>
</dbReference>
<dbReference type="InterPro" id="IPR002300">
    <property type="entry name" value="aa-tRNA-synth_Ia"/>
</dbReference>
<dbReference type="InterPro" id="IPR002302">
    <property type="entry name" value="Leu-tRNA-ligase"/>
</dbReference>
<dbReference type="InterPro" id="IPR025709">
    <property type="entry name" value="Leu_tRNA-synth_edit"/>
</dbReference>
<dbReference type="InterPro" id="IPR013155">
    <property type="entry name" value="M/V/L/I-tRNA-synth_anticd-bd"/>
</dbReference>
<dbReference type="InterPro" id="IPR015413">
    <property type="entry name" value="Methionyl/Leucyl_tRNA_Synth"/>
</dbReference>
<dbReference type="InterPro" id="IPR014729">
    <property type="entry name" value="Rossmann-like_a/b/a_fold"/>
</dbReference>
<dbReference type="InterPro" id="IPR009080">
    <property type="entry name" value="tRNAsynth_Ia_anticodon-bd"/>
</dbReference>
<dbReference type="InterPro" id="IPR009008">
    <property type="entry name" value="Val/Leu/Ile-tRNA-synth_edit"/>
</dbReference>
<dbReference type="NCBIfam" id="TIGR00396">
    <property type="entry name" value="leuS_bact"/>
    <property type="match status" value="1"/>
</dbReference>
<dbReference type="PANTHER" id="PTHR43740:SF2">
    <property type="entry name" value="LEUCINE--TRNA LIGASE, MITOCHONDRIAL"/>
    <property type="match status" value="1"/>
</dbReference>
<dbReference type="PANTHER" id="PTHR43740">
    <property type="entry name" value="LEUCYL-TRNA SYNTHETASE"/>
    <property type="match status" value="1"/>
</dbReference>
<dbReference type="Pfam" id="PF08264">
    <property type="entry name" value="Anticodon_1"/>
    <property type="match status" value="1"/>
</dbReference>
<dbReference type="Pfam" id="PF00133">
    <property type="entry name" value="tRNA-synt_1"/>
    <property type="match status" value="2"/>
</dbReference>
<dbReference type="Pfam" id="PF13603">
    <property type="entry name" value="tRNA-synt_1_2"/>
    <property type="match status" value="1"/>
</dbReference>
<dbReference type="Pfam" id="PF09334">
    <property type="entry name" value="tRNA-synt_1g"/>
    <property type="match status" value="1"/>
</dbReference>
<dbReference type="PRINTS" id="PR00985">
    <property type="entry name" value="TRNASYNTHLEU"/>
</dbReference>
<dbReference type="SUPFAM" id="SSF47323">
    <property type="entry name" value="Anticodon-binding domain of a subclass of class I aminoacyl-tRNA synthetases"/>
    <property type="match status" value="1"/>
</dbReference>
<dbReference type="SUPFAM" id="SSF52374">
    <property type="entry name" value="Nucleotidylyl transferase"/>
    <property type="match status" value="1"/>
</dbReference>
<dbReference type="SUPFAM" id="SSF50677">
    <property type="entry name" value="ValRS/IleRS/LeuRS editing domain"/>
    <property type="match status" value="1"/>
</dbReference>
<dbReference type="PROSITE" id="PS00178">
    <property type="entry name" value="AA_TRNA_LIGASE_I"/>
    <property type="match status" value="1"/>
</dbReference>
<feature type="chain" id="PRO_1000009302" description="Leucine--tRNA ligase">
    <location>
        <begin position="1"/>
        <end position="877"/>
    </location>
</feature>
<feature type="short sequence motif" description="'HIGH' region">
    <location>
        <begin position="43"/>
        <end position="53"/>
    </location>
</feature>
<feature type="short sequence motif" description="'KMSKS' region">
    <location>
        <begin position="628"/>
        <end position="632"/>
    </location>
</feature>
<feature type="binding site" evidence="1">
    <location>
        <position position="631"/>
    </location>
    <ligand>
        <name>ATP</name>
        <dbReference type="ChEBI" id="CHEBI:30616"/>
    </ligand>
</feature>
<protein>
    <recommendedName>
        <fullName evidence="1">Leucine--tRNA ligase</fullName>
        <ecNumber evidence="1">6.1.1.4</ecNumber>
    </recommendedName>
    <alternativeName>
        <fullName evidence="1">Leucyl-tRNA synthetase</fullName>
        <shortName evidence="1">LeuRS</shortName>
    </alternativeName>
</protein>
<proteinExistence type="inferred from homology"/>
<organism>
    <name type="scientific">Brucella abortus (strain 2308)</name>
    <dbReference type="NCBI Taxonomy" id="359391"/>
    <lineage>
        <taxon>Bacteria</taxon>
        <taxon>Pseudomonadati</taxon>
        <taxon>Pseudomonadota</taxon>
        <taxon>Alphaproteobacteria</taxon>
        <taxon>Hyphomicrobiales</taxon>
        <taxon>Brucellaceae</taxon>
        <taxon>Brucella/Ochrobactrum group</taxon>
        <taxon>Brucella</taxon>
    </lineage>
</organism>
<name>SYL_BRUA2</name>
<sequence length="877" mass="97890">MAAERYNPRVAEAHWQKVWEENRTFETDNSDSREKYYVLEMFPYPSGRIHMGHVRNYAMGDVVARYKRAKGFNVLHPMGWDAFGMPAENAAMQNKVHPKEWTYQNIATMKRQLKSMGLSLDWSREFATCDVEYYHRQQMLFIDLYEKGLVTRKTSKVNWDPVDNTVLANEQVVDGRGWRSGALVEQRELTQWFFKITDFSEELLAGLDTLDQWPEKVRLMQRNWIGKSEGLQVRFALAAGTAPAGFSEVEVYTTRPDTLFGAAFVAISADHPLAKKLSEGNAALSSFIEECHQQGTSLAALETAEKKGFDTGIKVKHPFDDNWELPVYVANFVLMEYGTGAVFGCPAHDQRDLDFANKYKLKVTPVVLPKGEDAASFSIGETAYTDDGVMINSRFLDGMTPEAAFNEVASRLEKTDLVGRPQAVRKVQFRLRDWGISRQRYWGCPIPMIHCESCGVNPVPRADLPVKLPDDVEFDRPGNPLDRHATWRHVKCPKCGGDARRETDTMDTFVDSSWYYTRFTAPWENEPTNRKAADHWLPVDQYIGGIEHAILHLLYSRFFTRAMKVAGHVGVDEPFKGLFTQGMVVHETYKANGQWVSPADIRIEEIDGKRVATMLDSGAPVEIGSIEKMSKSKKNVVDPDDIIASYGADTARWFVLSDSPPERDVIWTEAGAEGAHRFVQRIWRLVAEAAPALKDVAPKAGTQGEALGVSKAVHKAVKAVGDDIEKLAFNRGVARLYELVNTLSGALQQAADGKADAEMKGALREATEMLVLMTAPMMPHLAEQCLAELGGKVAGKETLVARAPWPVFDPALVVENEIVLPVQINGKKRGDLTIARDADQASIQQAVLELDFVKAALNGGSPKKIIVVPQRIVNVVA</sequence>
<reference key="1">
    <citation type="journal article" date="2005" name="Infect. Immun.">
        <title>Whole-genome analyses of speciation events in pathogenic Brucellae.</title>
        <authorList>
            <person name="Chain P.S."/>
            <person name="Comerci D.J."/>
            <person name="Tolmasky M.E."/>
            <person name="Larimer F.W."/>
            <person name="Malfatti S.A."/>
            <person name="Vergez L.M."/>
            <person name="Aguero F."/>
            <person name="Land M.L."/>
            <person name="Ugalde R.A."/>
            <person name="Garcia E."/>
        </authorList>
    </citation>
    <scope>NUCLEOTIDE SEQUENCE [LARGE SCALE GENOMIC DNA]</scope>
    <source>
        <strain>2308</strain>
    </source>
</reference>